<proteinExistence type="evidence at transcript level"/>
<protein>
    <recommendedName>
        <fullName>Decorin</fullName>
    </recommendedName>
    <alternativeName>
        <fullName>Bone proteoglycan II</fullName>
    </alternativeName>
    <alternativeName>
        <fullName>PG-S2</fullName>
    </alternativeName>
</protein>
<comment type="function">
    <text evidence="1">May affect the rate of fibrils formation.</text>
</comment>
<comment type="subunit">
    <text evidence="1">Binds to type I and type II collagen, fibronectin and TGF-beta. Forms a ternary complex with MFAP2 and ELN. Interacts with DPT (By similarity).</text>
</comment>
<comment type="subcellular location">
    <subcellularLocation>
        <location evidence="1">Secreted</location>
        <location evidence="1">Extracellular space</location>
        <location evidence="1">Extracellular matrix</location>
    </subcellularLocation>
    <subcellularLocation>
        <location evidence="2">Secreted</location>
    </subcellularLocation>
</comment>
<comment type="PTM">
    <text evidence="1">The attached glycosaminoglycan chain can be either chondroitin sulfate or dermatan sulfate depending upon the tissue of origin.</text>
</comment>
<comment type="similarity">
    <text evidence="5">Belongs to the small leucine-rich proteoglycan (SLRP) family. SLRP class I subfamily.</text>
</comment>
<evidence type="ECO:0000250" key="1"/>
<evidence type="ECO:0000250" key="2">
    <source>
        <dbReference type="UniProtKB" id="P07585"/>
    </source>
</evidence>
<evidence type="ECO:0000250" key="3">
    <source>
        <dbReference type="UniProtKB" id="Q01129"/>
    </source>
</evidence>
<evidence type="ECO:0000255" key="4"/>
<evidence type="ECO:0000305" key="5"/>
<accession>Q5R1V9</accession>
<name>PGS2_PANTR</name>
<dbReference type="EMBL" id="AB188288">
    <property type="protein sequence ID" value="BAD74039.1"/>
    <property type="molecule type" value="mRNA"/>
</dbReference>
<dbReference type="RefSeq" id="NP_001009082.1">
    <property type="nucleotide sequence ID" value="NM_001009082.1"/>
</dbReference>
<dbReference type="RefSeq" id="XP_009424245.1">
    <property type="nucleotide sequence ID" value="XM_009425970.4"/>
</dbReference>
<dbReference type="RefSeq" id="XP_016778090.1">
    <property type="nucleotide sequence ID" value="XM_016922601.3"/>
</dbReference>
<dbReference type="SMR" id="Q5R1V9"/>
<dbReference type="FunCoup" id="Q5R1V9">
    <property type="interactions" value="297"/>
</dbReference>
<dbReference type="STRING" id="9598.ENSPTRP00000008989"/>
<dbReference type="GlyCosmos" id="Q5R1V9">
    <property type="glycosylation" value="4 sites, No reported glycans"/>
</dbReference>
<dbReference type="PaxDb" id="9598-ENSPTRP00000008989"/>
<dbReference type="Ensembl" id="ENSPTRT00000009724.4">
    <property type="protein sequence ID" value="ENSPTRP00000008989.3"/>
    <property type="gene ID" value="ENSPTRG00000005290.7"/>
</dbReference>
<dbReference type="GeneID" id="452120"/>
<dbReference type="KEGG" id="ptr:452120"/>
<dbReference type="CTD" id="1634"/>
<dbReference type="VGNC" id="VGNC:5353">
    <property type="gene designation" value="DCN"/>
</dbReference>
<dbReference type="eggNOG" id="KOG0619">
    <property type="taxonomic scope" value="Eukaryota"/>
</dbReference>
<dbReference type="GeneTree" id="ENSGT00940000158382"/>
<dbReference type="HOGENOM" id="CLU_000288_186_0_1"/>
<dbReference type="InParanoid" id="Q5R1V9"/>
<dbReference type="OMA" id="FRCIYER"/>
<dbReference type="OrthoDB" id="6312at9604"/>
<dbReference type="TreeFam" id="TF334562"/>
<dbReference type="Proteomes" id="UP000002277">
    <property type="component" value="Chromosome 12"/>
</dbReference>
<dbReference type="Bgee" id="ENSPTRG00000005290">
    <property type="expression patterns" value="Expressed in fibroblast and 20 other cell types or tissues"/>
</dbReference>
<dbReference type="GO" id="GO:0005615">
    <property type="term" value="C:extracellular space"/>
    <property type="evidence" value="ECO:0000318"/>
    <property type="project" value="GO_Central"/>
</dbReference>
<dbReference type="GO" id="GO:0050840">
    <property type="term" value="F:extracellular matrix binding"/>
    <property type="evidence" value="ECO:0007669"/>
    <property type="project" value="Ensembl"/>
</dbReference>
<dbReference type="GO" id="GO:0005539">
    <property type="term" value="F:glycosaminoglycan binding"/>
    <property type="evidence" value="ECO:0007669"/>
    <property type="project" value="Ensembl"/>
</dbReference>
<dbReference type="GO" id="GO:0016525">
    <property type="term" value="P:negative regulation of angiogenesis"/>
    <property type="evidence" value="ECO:0007669"/>
    <property type="project" value="Ensembl"/>
</dbReference>
<dbReference type="GO" id="GO:0010596">
    <property type="term" value="P:negative regulation of endothelial cell migration"/>
    <property type="evidence" value="ECO:0007669"/>
    <property type="project" value="Ensembl"/>
</dbReference>
<dbReference type="GO" id="GO:1900747">
    <property type="term" value="P:negative regulation of vascular endothelial growth factor signaling pathway"/>
    <property type="evidence" value="ECO:0007669"/>
    <property type="project" value="Ensembl"/>
</dbReference>
<dbReference type="GO" id="GO:0016239">
    <property type="term" value="P:positive regulation of macroautophagy"/>
    <property type="evidence" value="ECO:0007669"/>
    <property type="project" value="Ensembl"/>
</dbReference>
<dbReference type="GO" id="GO:0051901">
    <property type="term" value="P:positive regulation of mitochondrial depolarization"/>
    <property type="evidence" value="ECO:0007669"/>
    <property type="project" value="Ensembl"/>
</dbReference>
<dbReference type="GO" id="GO:0090141">
    <property type="term" value="P:positive regulation of mitochondrial fission"/>
    <property type="evidence" value="ECO:0007669"/>
    <property type="project" value="Ensembl"/>
</dbReference>
<dbReference type="GO" id="GO:0051897">
    <property type="term" value="P:positive regulation of phosphatidylinositol 3-kinase/protein kinase B signal transduction"/>
    <property type="evidence" value="ECO:0007669"/>
    <property type="project" value="Ensembl"/>
</dbReference>
<dbReference type="GO" id="GO:0045944">
    <property type="term" value="P:positive regulation of transcription by RNA polymerase II"/>
    <property type="evidence" value="ECO:0007669"/>
    <property type="project" value="Ensembl"/>
</dbReference>
<dbReference type="FunFam" id="3.80.10.10:FF:000038">
    <property type="entry name" value="Biglycan"/>
    <property type="match status" value="1"/>
</dbReference>
<dbReference type="Gene3D" id="3.80.10.10">
    <property type="entry name" value="Ribonuclease Inhibitor"/>
    <property type="match status" value="1"/>
</dbReference>
<dbReference type="InterPro" id="IPR001611">
    <property type="entry name" value="Leu-rich_rpt"/>
</dbReference>
<dbReference type="InterPro" id="IPR003591">
    <property type="entry name" value="Leu-rich_rpt_typical-subtyp"/>
</dbReference>
<dbReference type="InterPro" id="IPR032675">
    <property type="entry name" value="LRR_dom_sf"/>
</dbReference>
<dbReference type="InterPro" id="IPR000372">
    <property type="entry name" value="LRRNT"/>
</dbReference>
<dbReference type="InterPro" id="IPR050333">
    <property type="entry name" value="SLRP"/>
</dbReference>
<dbReference type="InterPro" id="IPR016352">
    <property type="entry name" value="SLRP_I_decor/aspor/byglycan"/>
</dbReference>
<dbReference type="PANTHER" id="PTHR45712">
    <property type="entry name" value="AGAP008170-PA"/>
    <property type="match status" value="1"/>
</dbReference>
<dbReference type="PANTHER" id="PTHR45712:SF14">
    <property type="entry name" value="DECORIN"/>
    <property type="match status" value="1"/>
</dbReference>
<dbReference type="Pfam" id="PF13855">
    <property type="entry name" value="LRR_8"/>
    <property type="match status" value="3"/>
</dbReference>
<dbReference type="Pfam" id="PF01462">
    <property type="entry name" value="LRRNT"/>
    <property type="match status" value="1"/>
</dbReference>
<dbReference type="PIRSF" id="PIRSF002490">
    <property type="entry name" value="SLRP_I"/>
    <property type="match status" value="1"/>
</dbReference>
<dbReference type="SMART" id="SM00364">
    <property type="entry name" value="LRR_BAC"/>
    <property type="match status" value="4"/>
</dbReference>
<dbReference type="SMART" id="SM00369">
    <property type="entry name" value="LRR_TYP"/>
    <property type="match status" value="6"/>
</dbReference>
<dbReference type="SMART" id="SM00013">
    <property type="entry name" value="LRRNT"/>
    <property type="match status" value="1"/>
</dbReference>
<dbReference type="SUPFAM" id="SSF52058">
    <property type="entry name" value="L domain-like"/>
    <property type="match status" value="1"/>
</dbReference>
<dbReference type="PROSITE" id="PS51450">
    <property type="entry name" value="LRR"/>
    <property type="match status" value="8"/>
</dbReference>
<keyword id="KW-1015">Disulfide bond</keyword>
<keyword id="KW-0272">Extracellular matrix</keyword>
<keyword id="KW-0325">Glycoprotein</keyword>
<keyword id="KW-0433">Leucine-rich repeat</keyword>
<keyword id="KW-0654">Proteoglycan</keyword>
<keyword id="KW-1185">Reference proteome</keyword>
<keyword id="KW-0677">Repeat</keyword>
<keyword id="KW-0964">Secreted</keyword>
<keyword id="KW-0732">Signal</keyword>
<sequence length="359" mass="39747">MKATIILLLLAQVSWAGPFQQRGLFDFMLEDEASGIGPEVPDDRDFEPSLGPVCPFRCQCHLRVVQCSDLGLDKVPKDLPPDTTLLDLQNNKITEIKDGDFKNLKNLHALILVNNKISKVSPGAFTPLVKLERLYLSKNQLKELPEKMPKTLQELRAHENEITKVRKVTFNGLNQMIVIELGTNPLKSSGIENGAFQGMKKLSYIRIADTNITSIPQGLPPSLTELHLDGNKISRVDAASLKGLNNLAKLGLSFNSISAVDNGSLANTPHLRELHLDNNKLTRVPGGLAEHKYIQVVYLHNNNISVVGSSDFCPPGHNTKKASYSGVSLFSNPVQYWEIQPSTFRCVYVRSAIQLGNYK</sequence>
<organism>
    <name type="scientific">Pan troglodytes</name>
    <name type="common">Chimpanzee</name>
    <dbReference type="NCBI Taxonomy" id="9598"/>
    <lineage>
        <taxon>Eukaryota</taxon>
        <taxon>Metazoa</taxon>
        <taxon>Chordata</taxon>
        <taxon>Craniata</taxon>
        <taxon>Vertebrata</taxon>
        <taxon>Euteleostomi</taxon>
        <taxon>Mammalia</taxon>
        <taxon>Eutheria</taxon>
        <taxon>Euarchontoglires</taxon>
        <taxon>Primates</taxon>
        <taxon>Haplorrhini</taxon>
        <taxon>Catarrhini</taxon>
        <taxon>Hominidae</taxon>
        <taxon>Pan</taxon>
    </lineage>
</organism>
<gene>
    <name type="primary">DCN</name>
</gene>
<reference key="1">
    <citation type="submission" date="2004-08" db="EMBL/GenBank/DDBJ databases">
        <authorList>
            <person name="Hirai M."/>
            <person name="Sakate R."/>
            <person name="Hida M."/>
            <person name="Sugano S."/>
            <person name="Hayasaka I."/>
            <person name="Suto Y."/>
            <person name="Osada N."/>
            <person name="Hashimoto K."/>
        </authorList>
    </citation>
    <scope>NUCLEOTIDE SEQUENCE [MRNA]</scope>
    <source>
        <tissue>Skin</tissue>
    </source>
</reference>
<feature type="signal peptide" evidence="3">
    <location>
        <begin position="1"/>
        <end position="16"/>
    </location>
</feature>
<feature type="propeptide" id="PRO_0000032713" evidence="3">
    <location>
        <begin position="17"/>
        <end position="30"/>
    </location>
</feature>
<feature type="chain" id="PRO_0000032714" description="Decorin">
    <location>
        <begin position="31"/>
        <end position="359"/>
    </location>
</feature>
<feature type="repeat" description="LRR 1">
    <location>
        <begin position="73"/>
        <end position="93"/>
    </location>
</feature>
<feature type="repeat" description="LRR 2">
    <location>
        <begin position="94"/>
        <end position="117"/>
    </location>
</feature>
<feature type="repeat" description="LRR 3">
    <location>
        <begin position="118"/>
        <end position="141"/>
    </location>
</feature>
<feature type="repeat" description="LRR 4">
    <location>
        <begin position="142"/>
        <end position="162"/>
    </location>
</feature>
<feature type="repeat" description="LRR 5">
    <location>
        <begin position="163"/>
        <end position="186"/>
    </location>
</feature>
<feature type="repeat" description="LRR 6">
    <location>
        <begin position="187"/>
        <end position="212"/>
    </location>
</feature>
<feature type="repeat" description="LRR 7">
    <location>
        <begin position="213"/>
        <end position="233"/>
    </location>
</feature>
<feature type="repeat" description="LRR 8">
    <location>
        <begin position="234"/>
        <end position="257"/>
    </location>
</feature>
<feature type="repeat" description="LRR 9">
    <location>
        <begin position="258"/>
        <end position="281"/>
    </location>
</feature>
<feature type="repeat" description="LRR 10">
    <location>
        <begin position="282"/>
        <end position="304"/>
    </location>
</feature>
<feature type="repeat" description="LRR 11">
    <location>
        <begin position="305"/>
        <end position="334"/>
    </location>
</feature>
<feature type="repeat" description="LRR 12">
    <location>
        <begin position="335"/>
        <end position="359"/>
    </location>
</feature>
<feature type="glycosylation site" description="O-linked (Xyl...) (glycosaminoglycan) serine" evidence="2">
    <location>
        <position position="34"/>
    </location>
</feature>
<feature type="glycosylation site" description="N-linked (GlcNAc...) asparagine" evidence="4">
    <location>
        <position position="211"/>
    </location>
</feature>
<feature type="glycosylation site" description="N-linked (GlcNAc...) asparagine" evidence="4">
    <location>
        <position position="262"/>
    </location>
</feature>
<feature type="glycosylation site" description="N-linked (GlcNAc...) asparagine" evidence="4">
    <location>
        <position position="303"/>
    </location>
</feature>
<feature type="disulfide bond" evidence="1">
    <location>
        <begin position="54"/>
        <end position="60"/>
    </location>
</feature>
<feature type="disulfide bond" evidence="1">
    <location>
        <begin position="58"/>
        <end position="67"/>
    </location>
</feature>
<feature type="disulfide bond" evidence="1">
    <location>
        <begin position="313"/>
        <end position="346"/>
    </location>
</feature>